<gene>
    <name evidence="1" type="primary">miaA</name>
    <name type="ordered locus">VCM66_0330</name>
</gene>
<feature type="chain" id="PRO_1000191872" description="tRNA dimethylallyltransferase">
    <location>
        <begin position="1"/>
        <end position="315"/>
    </location>
</feature>
<feature type="region of interest" description="Interaction with substrate tRNA" evidence="1">
    <location>
        <begin position="38"/>
        <end position="41"/>
    </location>
</feature>
<feature type="region of interest" description="Interaction with substrate tRNA" evidence="1">
    <location>
        <begin position="162"/>
        <end position="166"/>
    </location>
</feature>
<feature type="region of interest" description="Interaction with substrate tRNA" evidence="1">
    <location>
        <begin position="243"/>
        <end position="248"/>
    </location>
</feature>
<feature type="region of interest" description="Interaction with substrate tRNA" evidence="1">
    <location>
        <begin position="276"/>
        <end position="283"/>
    </location>
</feature>
<feature type="binding site" evidence="1">
    <location>
        <begin position="13"/>
        <end position="20"/>
    </location>
    <ligand>
        <name>ATP</name>
        <dbReference type="ChEBI" id="CHEBI:30616"/>
    </ligand>
</feature>
<feature type="binding site" evidence="1">
    <location>
        <begin position="15"/>
        <end position="20"/>
    </location>
    <ligand>
        <name>substrate</name>
    </ligand>
</feature>
<feature type="site" description="Interaction with substrate tRNA" evidence="1">
    <location>
        <position position="104"/>
    </location>
</feature>
<feature type="site" description="Interaction with substrate tRNA" evidence="1">
    <location>
        <position position="126"/>
    </location>
</feature>
<proteinExistence type="inferred from homology"/>
<dbReference type="EC" id="2.5.1.75" evidence="1"/>
<dbReference type="EMBL" id="CP001233">
    <property type="protein sequence ID" value="ACP04658.1"/>
    <property type="molecule type" value="Genomic_DNA"/>
</dbReference>
<dbReference type="RefSeq" id="WP_000192300.1">
    <property type="nucleotide sequence ID" value="NC_012578.1"/>
</dbReference>
<dbReference type="SMR" id="C3LR78"/>
<dbReference type="KEGG" id="vcm:VCM66_0330"/>
<dbReference type="HOGENOM" id="CLU_032616_0_0_6"/>
<dbReference type="Proteomes" id="UP000001217">
    <property type="component" value="Chromosome I"/>
</dbReference>
<dbReference type="GO" id="GO:0005524">
    <property type="term" value="F:ATP binding"/>
    <property type="evidence" value="ECO:0007669"/>
    <property type="project" value="UniProtKB-UniRule"/>
</dbReference>
<dbReference type="GO" id="GO:0052381">
    <property type="term" value="F:tRNA dimethylallyltransferase activity"/>
    <property type="evidence" value="ECO:0007669"/>
    <property type="project" value="UniProtKB-UniRule"/>
</dbReference>
<dbReference type="GO" id="GO:0006400">
    <property type="term" value="P:tRNA modification"/>
    <property type="evidence" value="ECO:0007669"/>
    <property type="project" value="TreeGrafter"/>
</dbReference>
<dbReference type="FunFam" id="1.10.20.140:FF:000001">
    <property type="entry name" value="tRNA dimethylallyltransferase"/>
    <property type="match status" value="1"/>
</dbReference>
<dbReference type="Gene3D" id="1.10.20.140">
    <property type="match status" value="1"/>
</dbReference>
<dbReference type="Gene3D" id="3.40.50.300">
    <property type="entry name" value="P-loop containing nucleotide triphosphate hydrolases"/>
    <property type="match status" value="1"/>
</dbReference>
<dbReference type="HAMAP" id="MF_00185">
    <property type="entry name" value="IPP_trans"/>
    <property type="match status" value="1"/>
</dbReference>
<dbReference type="InterPro" id="IPR039657">
    <property type="entry name" value="Dimethylallyltransferase"/>
</dbReference>
<dbReference type="InterPro" id="IPR018022">
    <property type="entry name" value="IPT"/>
</dbReference>
<dbReference type="InterPro" id="IPR027417">
    <property type="entry name" value="P-loop_NTPase"/>
</dbReference>
<dbReference type="NCBIfam" id="TIGR00174">
    <property type="entry name" value="miaA"/>
    <property type="match status" value="1"/>
</dbReference>
<dbReference type="PANTHER" id="PTHR11088">
    <property type="entry name" value="TRNA DIMETHYLALLYLTRANSFERASE"/>
    <property type="match status" value="1"/>
</dbReference>
<dbReference type="PANTHER" id="PTHR11088:SF60">
    <property type="entry name" value="TRNA DIMETHYLALLYLTRANSFERASE"/>
    <property type="match status" value="1"/>
</dbReference>
<dbReference type="Pfam" id="PF01715">
    <property type="entry name" value="IPPT"/>
    <property type="match status" value="1"/>
</dbReference>
<dbReference type="SUPFAM" id="SSF52540">
    <property type="entry name" value="P-loop containing nucleoside triphosphate hydrolases"/>
    <property type="match status" value="1"/>
</dbReference>
<keyword id="KW-0067">ATP-binding</keyword>
<keyword id="KW-0460">Magnesium</keyword>
<keyword id="KW-0547">Nucleotide-binding</keyword>
<keyword id="KW-0808">Transferase</keyword>
<keyword id="KW-0819">tRNA processing</keyword>
<protein>
    <recommendedName>
        <fullName evidence="1">tRNA dimethylallyltransferase</fullName>
        <ecNumber evidence="1">2.5.1.75</ecNumber>
    </recommendedName>
    <alternativeName>
        <fullName evidence="1">Dimethylallyl diphosphate:tRNA dimethylallyltransferase</fullName>
        <shortName evidence="1">DMAPP:tRNA dimethylallyltransferase</shortName>
        <shortName evidence="1">DMATase</shortName>
    </alternativeName>
    <alternativeName>
        <fullName evidence="1">Isopentenyl-diphosphate:tRNA isopentenyltransferase</fullName>
        <shortName evidence="1">IPP transferase</shortName>
        <shortName evidence="1">IPPT</shortName>
        <shortName evidence="1">IPTase</shortName>
    </alternativeName>
</protein>
<accession>C3LR78</accession>
<sequence>MTQKLPLALFLMGPTASGKTDLAIRLRQKYPVEIISVDSALIYRGMDIGTAKPDAQELALAPHRLIDILDPSEAYSAADFRRDALKEMADIVAQGKIPLLVGGTMLYFKALLEGLSPLPAADPVIRQQIELEAEKLGWQALHDQLQQIDPVSAQRIHPNDPQRLSRALEVYRISGKTLTELTQTKGEAIPYRVLQFAIAPKERAELHRRIELRFEKMVESGFEEEVKALYARDDLHPDLPSIRCVGYRQMWDYLDGHGTLDEAIYRGICATRQLAKRQITWLRSWDDLTWLDSENVDQAVETLSNAIASNEISCV</sequence>
<comment type="function">
    <text evidence="1">Catalyzes the transfer of a dimethylallyl group onto the adenine at position 37 in tRNAs that read codons beginning with uridine, leading to the formation of N6-(dimethylallyl)adenosine (i(6)A).</text>
</comment>
<comment type="catalytic activity">
    <reaction evidence="1">
        <text>adenosine(37) in tRNA + dimethylallyl diphosphate = N(6)-dimethylallyladenosine(37) in tRNA + diphosphate</text>
        <dbReference type="Rhea" id="RHEA:26482"/>
        <dbReference type="Rhea" id="RHEA-COMP:10162"/>
        <dbReference type="Rhea" id="RHEA-COMP:10375"/>
        <dbReference type="ChEBI" id="CHEBI:33019"/>
        <dbReference type="ChEBI" id="CHEBI:57623"/>
        <dbReference type="ChEBI" id="CHEBI:74411"/>
        <dbReference type="ChEBI" id="CHEBI:74415"/>
        <dbReference type="EC" id="2.5.1.75"/>
    </reaction>
</comment>
<comment type="cofactor">
    <cofactor evidence="1">
        <name>Mg(2+)</name>
        <dbReference type="ChEBI" id="CHEBI:18420"/>
    </cofactor>
</comment>
<comment type="subunit">
    <text evidence="1">Monomer.</text>
</comment>
<comment type="similarity">
    <text evidence="1">Belongs to the IPP transferase family.</text>
</comment>
<name>MIAA_VIBCM</name>
<reference key="1">
    <citation type="journal article" date="2008" name="PLoS ONE">
        <title>A recalibrated molecular clock and independent origins for the cholera pandemic clones.</title>
        <authorList>
            <person name="Feng L."/>
            <person name="Reeves P.R."/>
            <person name="Lan R."/>
            <person name="Ren Y."/>
            <person name="Gao C."/>
            <person name="Zhou Z."/>
            <person name="Ren Y."/>
            <person name="Cheng J."/>
            <person name="Wang W."/>
            <person name="Wang J."/>
            <person name="Qian W."/>
            <person name="Li D."/>
            <person name="Wang L."/>
        </authorList>
    </citation>
    <scope>NUCLEOTIDE SEQUENCE [LARGE SCALE GENOMIC DNA]</scope>
    <source>
        <strain>M66-2</strain>
    </source>
</reference>
<evidence type="ECO:0000255" key="1">
    <source>
        <dbReference type="HAMAP-Rule" id="MF_00185"/>
    </source>
</evidence>
<organism>
    <name type="scientific">Vibrio cholerae serotype O1 (strain M66-2)</name>
    <dbReference type="NCBI Taxonomy" id="579112"/>
    <lineage>
        <taxon>Bacteria</taxon>
        <taxon>Pseudomonadati</taxon>
        <taxon>Pseudomonadota</taxon>
        <taxon>Gammaproteobacteria</taxon>
        <taxon>Vibrionales</taxon>
        <taxon>Vibrionaceae</taxon>
        <taxon>Vibrio</taxon>
    </lineage>
</organism>